<organism>
    <name type="scientific">Campylobacter curvus (strain 525.92)</name>
    <dbReference type="NCBI Taxonomy" id="360105"/>
    <lineage>
        <taxon>Bacteria</taxon>
        <taxon>Pseudomonadati</taxon>
        <taxon>Campylobacterota</taxon>
        <taxon>Epsilonproteobacteria</taxon>
        <taxon>Campylobacterales</taxon>
        <taxon>Campylobacteraceae</taxon>
        <taxon>Campylobacter</taxon>
    </lineage>
</organism>
<protein>
    <recommendedName>
        <fullName evidence="1">Phosphoribosylaminoimidazole-succinocarboxamide synthase</fullName>
        <ecNumber evidence="1">6.3.2.6</ecNumber>
    </recommendedName>
    <alternativeName>
        <fullName evidence="1">SAICAR synthetase</fullName>
    </alternativeName>
</protein>
<name>PUR7_CAMC5</name>
<keyword id="KW-0067">ATP-binding</keyword>
<keyword id="KW-0436">Ligase</keyword>
<keyword id="KW-0547">Nucleotide-binding</keyword>
<keyword id="KW-0658">Purine biosynthesis</keyword>
<keyword id="KW-1185">Reference proteome</keyword>
<dbReference type="EC" id="6.3.2.6" evidence="1"/>
<dbReference type="EMBL" id="CP000767">
    <property type="protein sequence ID" value="EAU00544.1"/>
    <property type="molecule type" value="Genomic_DNA"/>
</dbReference>
<dbReference type="RefSeq" id="WP_009651333.1">
    <property type="nucleotide sequence ID" value="NC_009715.2"/>
</dbReference>
<dbReference type="SMR" id="A7GYK7"/>
<dbReference type="STRING" id="360105.CCV52592_2005"/>
<dbReference type="GeneID" id="61002298"/>
<dbReference type="KEGG" id="ccv:CCV52592_2005"/>
<dbReference type="HOGENOM" id="CLU_061495_2_0_7"/>
<dbReference type="OrthoDB" id="9801549at2"/>
<dbReference type="UniPathway" id="UPA00074">
    <property type="reaction ID" value="UER00131"/>
</dbReference>
<dbReference type="Proteomes" id="UP000006380">
    <property type="component" value="Chromosome"/>
</dbReference>
<dbReference type="GO" id="GO:0005524">
    <property type="term" value="F:ATP binding"/>
    <property type="evidence" value="ECO:0007669"/>
    <property type="project" value="UniProtKB-KW"/>
</dbReference>
<dbReference type="GO" id="GO:0004639">
    <property type="term" value="F:phosphoribosylaminoimidazolesuccinocarboxamide synthase activity"/>
    <property type="evidence" value="ECO:0007669"/>
    <property type="project" value="UniProtKB-UniRule"/>
</dbReference>
<dbReference type="GO" id="GO:0006189">
    <property type="term" value="P:'de novo' IMP biosynthetic process"/>
    <property type="evidence" value="ECO:0007669"/>
    <property type="project" value="UniProtKB-UniRule"/>
</dbReference>
<dbReference type="GO" id="GO:0009236">
    <property type="term" value="P:cobalamin biosynthetic process"/>
    <property type="evidence" value="ECO:0007669"/>
    <property type="project" value="InterPro"/>
</dbReference>
<dbReference type="CDD" id="cd01415">
    <property type="entry name" value="SAICAR_synt_PurC"/>
    <property type="match status" value="1"/>
</dbReference>
<dbReference type="FunFam" id="3.30.470.20:FF:000006">
    <property type="entry name" value="Phosphoribosylaminoimidazole-succinocarboxamide synthase"/>
    <property type="match status" value="1"/>
</dbReference>
<dbReference type="Gene3D" id="3.30.470.20">
    <property type="entry name" value="ATP-grasp fold, B domain"/>
    <property type="match status" value="1"/>
</dbReference>
<dbReference type="Gene3D" id="3.30.200.20">
    <property type="entry name" value="Phosphorylase Kinase, domain 1"/>
    <property type="match status" value="1"/>
</dbReference>
<dbReference type="HAMAP" id="MF_00137">
    <property type="entry name" value="SAICAR_synth"/>
    <property type="match status" value="1"/>
</dbReference>
<dbReference type="InterPro" id="IPR028923">
    <property type="entry name" value="SAICAR_synt/ADE2_N"/>
</dbReference>
<dbReference type="InterPro" id="IPR033934">
    <property type="entry name" value="SAICAR_synt_PurC"/>
</dbReference>
<dbReference type="InterPro" id="IPR001636">
    <property type="entry name" value="SAICAR_synth"/>
</dbReference>
<dbReference type="InterPro" id="IPR050089">
    <property type="entry name" value="SAICAR_synthetase"/>
</dbReference>
<dbReference type="InterPro" id="IPR018236">
    <property type="entry name" value="SAICAR_synthetase_CS"/>
</dbReference>
<dbReference type="NCBIfam" id="TIGR00081">
    <property type="entry name" value="purC"/>
    <property type="match status" value="1"/>
</dbReference>
<dbReference type="PANTHER" id="PTHR43599">
    <property type="entry name" value="MULTIFUNCTIONAL PROTEIN ADE2"/>
    <property type="match status" value="1"/>
</dbReference>
<dbReference type="PANTHER" id="PTHR43599:SF3">
    <property type="entry name" value="SI:DKEY-6E2.2"/>
    <property type="match status" value="1"/>
</dbReference>
<dbReference type="Pfam" id="PF01259">
    <property type="entry name" value="SAICAR_synt"/>
    <property type="match status" value="1"/>
</dbReference>
<dbReference type="SUPFAM" id="SSF56104">
    <property type="entry name" value="SAICAR synthase-like"/>
    <property type="match status" value="1"/>
</dbReference>
<dbReference type="PROSITE" id="PS01057">
    <property type="entry name" value="SAICAR_SYNTHETASE_1"/>
    <property type="match status" value="1"/>
</dbReference>
<dbReference type="PROSITE" id="PS01058">
    <property type="entry name" value="SAICAR_SYNTHETASE_2"/>
    <property type="match status" value="1"/>
</dbReference>
<sequence length="236" mass="27089">MQKRELIYEGKGKKMYATDDANLLIAEFKDDLTAFDAQKRGNEAGKGALNNKISTQIFKILKEKGIETDLVETISDTEQLVKKCEIIPLEVVVRNIATGSLTKRLAIKEGTVLPFPLVEFYFKNDELHDPLVTDEHCLVMGLVKSEKDLQTLRHLAREINSILFKFFEERKLKLVDFKIEFGMDKDGNILLADEISPDSCRFWDADTNEKLDKDRFRQDLGSVKVAYEEVLRRILS</sequence>
<comment type="catalytic activity">
    <reaction evidence="1">
        <text>5-amino-1-(5-phospho-D-ribosyl)imidazole-4-carboxylate + L-aspartate + ATP = (2S)-2-[5-amino-1-(5-phospho-beta-D-ribosyl)imidazole-4-carboxamido]succinate + ADP + phosphate + 2 H(+)</text>
        <dbReference type="Rhea" id="RHEA:22628"/>
        <dbReference type="ChEBI" id="CHEBI:15378"/>
        <dbReference type="ChEBI" id="CHEBI:29991"/>
        <dbReference type="ChEBI" id="CHEBI:30616"/>
        <dbReference type="ChEBI" id="CHEBI:43474"/>
        <dbReference type="ChEBI" id="CHEBI:58443"/>
        <dbReference type="ChEBI" id="CHEBI:77657"/>
        <dbReference type="ChEBI" id="CHEBI:456216"/>
        <dbReference type="EC" id="6.3.2.6"/>
    </reaction>
</comment>
<comment type="pathway">
    <text evidence="1">Purine metabolism; IMP biosynthesis via de novo pathway; 5-amino-1-(5-phospho-D-ribosyl)imidazole-4-carboxamide from 5-amino-1-(5-phospho-D-ribosyl)imidazole-4-carboxylate: step 1/2.</text>
</comment>
<comment type="similarity">
    <text evidence="1">Belongs to the SAICAR synthetase family.</text>
</comment>
<gene>
    <name evidence="1" type="primary">purC</name>
    <name type="ordered locus">Ccur92_09950</name>
    <name type="ORF">CCV52592_2005</name>
</gene>
<feature type="chain" id="PRO_1000018679" description="Phosphoribosylaminoimidazole-succinocarboxamide synthase">
    <location>
        <begin position="1"/>
        <end position="236"/>
    </location>
</feature>
<evidence type="ECO:0000255" key="1">
    <source>
        <dbReference type="HAMAP-Rule" id="MF_00137"/>
    </source>
</evidence>
<reference key="1">
    <citation type="submission" date="2007-07" db="EMBL/GenBank/DDBJ databases">
        <title>Genome sequence of Campylobacter curvus 525.92 isolated from human feces.</title>
        <authorList>
            <person name="Fouts D.E."/>
            <person name="Mongodin E.F."/>
            <person name="Puiu D."/>
            <person name="Sebastian Y."/>
            <person name="Miller W.G."/>
            <person name="Mandrell R.E."/>
            <person name="Lastovica A.J."/>
            <person name="Nelson K.E."/>
        </authorList>
    </citation>
    <scope>NUCLEOTIDE SEQUENCE [LARGE SCALE GENOMIC DNA]</scope>
    <source>
        <strain>525.92</strain>
    </source>
</reference>
<accession>A7GYK7</accession>
<proteinExistence type="inferred from homology"/>